<name>AGO_THET2</name>
<protein>
    <recommendedName>
        <fullName evidence="15">Protein argonaute</fullName>
        <shortName evidence="16">TtAgo</shortName>
        <ecNumber evidence="5 7">3.1.24.-</ecNumber>
    </recommendedName>
</protein>
<comment type="function">
    <text evidence="7 10 11 14 24">A DNA-guided ssDNA endonuclease. Uses short ssDNA sequences as guides (gDNA, also called small interfering DNA, siDNA) to bind complementary DNA target strands, resulting in cleavage of the target DNA (tDNA). The cleavage site is 10 nucleotides (nt) downstream of the target residue base-paired with the 5'-end of the gDNA (PubMed:24531762, PubMed:28911094). Plays a role in completion of DNA replication, participates in decatenating replicated DNA and plasmid. In situ purifies with 5'-phosphorylated long DNA (about 1160 nt, maps to the whole chromosome and plasmid), 25-35 nt RNAs that map to the whole chromosome and 15-18 nt DNA that maps to the replication terminus region (ter) on the chromosome and plasmid. Most short DNA starts with dC (PubMed:32846159). Has been shown to have guide sequence-independent dsDNase activity called 'chopping', which requires unstable DNA (high AT-content, multiple mismatches or low salt conditions), and could be used to generate gDNA. Preferentially binds tDNA with dC at its 3'-terminus (PubMed:28262506). Has also been shown to have no detectable guide sequence-independent dsDNase activity (PubMed:32846159). The latter study proposes TtAgo may acquire gDNA from nicked dsDNA, by binding to 5'-phosphorylated-dC nicks, then cleaving 10 nt away on the opposite strand; subsequently an exonuclease (maybe AddA-AddB helicase/nuclease) trims the ends to generate the gDNA (Probable) (PubMed:32846159).</text>
</comment>
<comment type="function">
    <text evidence="5 7 8 9 11">Involved in defense against invading mobile genetic elements (PubMed:24531762, PubMed:25331432, PubMed:25902012). TtAgo interferes with plasmid DNA, stimulates expression of specific endogenous genes, including various CRISPR loci and at least part of the CRISPR adaptation machinery, but only when exogenous plasmid DNA is present (PubMed:25902012). Upon purification from E.coli associates with gDNA 13-25 nt long with 5'-phosphorylated ends and with 10-150 nt RNA with 5'-OH. DNA corresponds to the expression plasmid rather than chromosomal DNA; 89% of gDNA starts with dC and 72% has dA in the second position. Endonucleolytically cleaves tDNA with 5'-phosphorylated gDNA but not 5'-phosphorylated gRNA; the active site is involved in processing or binding of ssDNA. Nicks or linearizes supercoiled plasmid target when it has the appropriate gDNA sequences, does not cleave linear tDNA (PubMed:24531762). Positions 4 to 16 of the tDNA need to be base paired to the gDNA for efficient tDNA cleavage (PubMed:19812667). Although the system can support single nucleotide insertions in either the gDNA or tDNA, in all cases cleavage activity is reduced, with a wide range of sequence- and position-specific effects (PubMed:28911094).</text>
</comment>
<comment type="function">
    <text evidence="3 4 5 6">First characterized as a DNA-guided RNA endonuclease. Uses gDNA to bind complementary RNA target strands, resulting in cleavage of the target RNA. The cleavage site is 10 nucleotides (nt) downstream of the target residue base-paired with the 5'-end of the guide DNA.</text>
</comment>
<comment type="cofactor">
    <cofactor evidence="3 5 6 7 14">
        <name>Mn(2+)</name>
        <dbReference type="ChEBI" id="CHEBI:29035"/>
    </cofactor>
    <text evidence="3 5 6 7 23">Binds 3 Mn(2+) per subunit (Probable) (PubMed:24374628). Target RNA cleavage occurs in the presence of Mn(2+) (PubMed:18754009, PubMed:19812667). Prefers Mn(2+) over Mg(2+) for tDNA cleavage (PubMed:24531762). tDNA cleavage occurs in the presence of Mn(2+) or Mg(2+) with a slight preference for Mn(2+), no cleavage occurs in the presence of Ca(2+) (PubMed:19812667, PubMed:24374628).</text>
</comment>
<comment type="biophysicochemical properties">
    <temperatureDependence>
        <text evidence="4 5 7">Optimum temperature is 55-70 degrees Celsius for cleavage of gDNA:target RNA hybrids, increased cleavage and background hydrolysis are seen at 70 degrees Celsius (PubMed:19092929). gDNA:tDNA cleavage is enhanced at 75 degrees Celsius (PubMed:19812667). Activity on 98 nt tDNA occurs at 20 degrees Celsius, but on plasmid dsDNA only occurs at 65 degrees Celsius or higher (PubMed:24531762).</text>
    </temperatureDependence>
</comment>
<comment type="subunit">
    <text evidence="14">Coimmunoprecipitates with a number of proteins involved in DNA replication or recombination including RepA (initiates replication), AddA/B (TT_C0638 and TT_C0639), ArgR, GyrA/B, HU (TT_C0984), PriA, Rad52 (TT_C1923), RecJ, SSB, TopA and UvrB. Most proteins remain associated with TtAgo after DNase treatment and associate with catalytically inactive protein.</text>
</comment>
<comment type="induction">
    <text evidence="14">Expressed during growth phase (at protein level).</text>
</comment>
<comment type="domain">
    <text evidence="3 4 5 6">Has 4 domains (N-terminal, PAZ, Mid and PIWI). The N-terminal and PAZ domains are joined by linker L1, the PAZ and Mid domains are joined by linker L2. The domains assemble in 2 lobes; the PAZ lobe consists of the N-terminal, L1, PAZ and L2 domains, while the PIWI lobe has the Mid and PIWI domains. The PIWI domain assumes an RNase H fold and has the catalytic residues. gDNA lies between the 2 lobes, with its unpaired 5'-end anchored in the Mid lobe while the 3'-end anchors in the PAZ domain in the absence of target or if target nucleic acid has not fully base-paired with the gDNA. The N-terminal, Mid and PAZ domains alter position upon binding different length gDNA, forming and closing DNA-binding channels (PubMed:18754009, PubMed:19092929, PubMed:19812667). The 2 lobes and gDNA move considerably upon formation of the ternary gDNA:target RNA:TtAgo complex to accomodate and base pair the target RNA (PubMed:19092929, PubMed:19812667, PubMed:24374628). Deletions of the N-terminus (residues 1-106 or 1-177) have lost catalytic activity (PubMed:19812667). Upon release of the 3'-end of the gDNA from the PAZ domain during nucleic acid duplex formation, Glu-512 moves about 13 Angstroms to complete the active site (PubMed:24374628).</text>
</comment>
<comment type="disruption phenotype">
    <text evidence="7 8 9 14">Increased competence for naked plasmid transformation, increased levels of plasmid DNA (PubMed:24531762, PubMed:25331432). No substantial change in gene expression (PubMed:24531762, PubMed:25902012). No effect on natural cell-to-cell conjugation (PubMed:25331432). Wild-type cells outcompete deletion strains by nearly 2-fold after 12 days in rich medium. Increased sensitivity to gyrase inhibitor ciprofloxacin, increased adundance of ter-mapping DNA in immunoprecipitated TtAgo, cells are longer than wild-type and form filaments with thin DNA filaments between cells upon ciprofloxacin (a GyrA inhibitor) treatment (PubMed:32846159).</text>
</comment>
<comment type="biotechnology">
    <text evidence="12">Can be used to create artificial restriction enzymes using denatured tDNA and providing appropriate guide DNAs. This is particularly useful when cloning a region without any known restriction enzyme sites. Addition of UvrD (TT_C1062) enhances cleavage of supercoiled plasmid DNA in vitro. Addition of engineered thermostable SSB (ET SSB) allows cleavage of linear DNA and GC-rich DNA and enhances use as a artifical restriction enzyme.</text>
</comment>
<comment type="biotechnology">
    <text evidence="13">Can be used for genome editing.</text>
</comment>
<comment type="similarity">
    <text evidence="18">Belongs to the argonaute family. Long pAgo subfamily.</text>
</comment>
<comment type="caution">
    <text evidence="6">Structures with a target of 12 nt or less are in a cleavage-incompatible state. As target size increases cleavage becomes possible; a 15 nt RNA target is cleavage compatible while a 15 nt DNA target is cleavage incompatible.</text>
</comment>
<evidence type="ECO:0000255" key="1">
    <source>
        <dbReference type="PROSITE-ProRule" id="PRU00142"/>
    </source>
</evidence>
<evidence type="ECO:0000255" key="2">
    <source>
        <dbReference type="PROSITE-ProRule" id="PRU00150"/>
    </source>
</evidence>
<evidence type="ECO:0000269" key="3">
    <source>
    </source>
</evidence>
<evidence type="ECO:0000269" key="4">
    <source>
    </source>
</evidence>
<evidence type="ECO:0000269" key="5">
    <source>
    </source>
</evidence>
<evidence type="ECO:0000269" key="6">
    <source>
    </source>
</evidence>
<evidence type="ECO:0000269" key="7">
    <source>
    </source>
</evidence>
<evidence type="ECO:0000269" key="8">
    <source>
    </source>
</evidence>
<evidence type="ECO:0000269" key="9">
    <source>
    </source>
</evidence>
<evidence type="ECO:0000269" key="10">
    <source>
    </source>
</evidence>
<evidence type="ECO:0000269" key="11">
    <source>
    </source>
</evidence>
<evidence type="ECO:0000269" key="12">
    <source>
    </source>
</evidence>
<evidence type="ECO:0000269" key="13">
    <source>
    </source>
</evidence>
<evidence type="ECO:0000269" key="14">
    <source>
    </source>
</evidence>
<evidence type="ECO:0000303" key="15">
    <source>
    </source>
</evidence>
<evidence type="ECO:0000303" key="16">
    <source>
    </source>
</evidence>
<evidence type="ECO:0000303" key="17">
    <source>
    </source>
</evidence>
<evidence type="ECO:0000305" key="18"/>
<evidence type="ECO:0000305" key="19">
    <source>
    </source>
</evidence>
<evidence type="ECO:0000305" key="20">
    <source>
    </source>
</evidence>
<evidence type="ECO:0000305" key="21">
    <source>
    </source>
</evidence>
<evidence type="ECO:0000305" key="22">
    <source>
    </source>
</evidence>
<evidence type="ECO:0000305" key="23">
    <source>
    </source>
</evidence>
<evidence type="ECO:0000305" key="24">
    <source>
    </source>
</evidence>
<evidence type="ECO:0000312" key="25">
    <source>
        <dbReference type="EMBL" id="AAS82356.1"/>
    </source>
</evidence>
<evidence type="ECO:0007744" key="26">
    <source>
        <dbReference type="PDB" id="3DLB"/>
    </source>
</evidence>
<evidence type="ECO:0007744" key="27">
    <source>
        <dbReference type="PDB" id="3DLH"/>
    </source>
</evidence>
<evidence type="ECO:0007744" key="28">
    <source>
        <dbReference type="PDB" id="3F73"/>
    </source>
</evidence>
<evidence type="ECO:0007744" key="29">
    <source>
        <dbReference type="PDB" id="3HJF"/>
    </source>
</evidence>
<evidence type="ECO:0007744" key="30">
    <source>
        <dbReference type="PDB" id="3HK2"/>
    </source>
</evidence>
<evidence type="ECO:0007744" key="31">
    <source>
        <dbReference type="PDB" id="3HM9"/>
    </source>
</evidence>
<evidence type="ECO:0007744" key="32">
    <source>
        <dbReference type="PDB" id="3HO1"/>
    </source>
</evidence>
<evidence type="ECO:0007744" key="33">
    <source>
        <dbReference type="PDB" id="3HVR"/>
    </source>
</evidence>
<evidence type="ECO:0007744" key="34">
    <source>
        <dbReference type="PDB" id="3HXM"/>
    </source>
</evidence>
<evidence type="ECO:0007744" key="35">
    <source>
        <dbReference type="PDB" id="4KPY"/>
    </source>
</evidence>
<evidence type="ECO:0007744" key="36">
    <source>
        <dbReference type="PDB" id="4N41"/>
    </source>
</evidence>
<evidence type="ECO:0007744" key="37">
    <source>
        <dbReference type="PDB" id="4N47"/>
    </source>
</evidence>
<evidence type="ECO:0007744" key="38">
    <source>
        <dbReference type="PDB" id="4N76"/>
    </source>
</evidence>
<evidence type="ECO:0007744" key="39">
    <source>
        <dbReference type="PDB" id="4NCA"/>
    </source>
</evidence>
<evidence type="ECO:0007744" key="40">
    <source>
        <dbReference type="PDB" id="4NCB"/>
    </source>
</evidence>
<evidence type="ECO:0007744" key="41">
    <source>
        <dbReference type="PDB" id="5GQ9"/>
    </source>
</evidence>
<evidence type="ECO:0007744" key="42">
    <source>
        <dbReference type="PDB" id="5XOU"/>
    </source>
</evidence>
<evidence type="ECO:0007744" key="43">
    <source>
        <dbReference type="PDB" id="5XOW"/>
    </source>
</evidence>
<evidence type="ECO:0007744" key="44">
    <source>
        <dbReference type="PDB" id="5XP8"/>
    </source>
</evidence>
<evidence type="ECO:0007744" key="45">
    <source>
        <dbReference type="PDB" id="5XPA"/>
    </source>
</evidence>
<evidence type="ECO:0007744" key="46">
    <source>
        <dbReference type="PDB" id="5XPG"/>
    </source>
</evidence>
<evidence type="ECO:0007744" key="47">
    <source>
        <dbReference type="PDB" id="5XQ2"/>
    </source>
</evidence>
<evidence type="ECO:0007829" key="48">
    <source>
        <dbReference type="PDB" id="3DLH"/>
    </source>
</evidence>
<evidence type="ECO:0007829" key="49">
    <source>
        <dbReference type="PDB" id="3F73"/>
    </source>
</evidence>
<evidence type="ECO:0007829" key="50">
    <source>
        <dbReference type="PDB" id="3HJF"/>
    </source>
</evidence>
<evidence type="ECO:0007829" key="51">
    <source>
        <dbReference type="PDB" id="3HK2"/>
    </source>
</evidence>
<evidence type="ECO:0007829" key="52">
    <source>
        <dbReference type="PDB" id="4KPY"/>
    </source>
</evidence>
<evidence type="ECO:0007829" key="53">
    <source>
        <dbReference type="PDB" id="4N41"/>
    </source>
</evidence>
<evidence type="ECO:0007829" key="54">
    <source>
        <dbReference type="PDB" id="4N47"/>
    </source>
</evidence>
<evidence type="ECO:0007829" key="55">
    <source>
        <dbReference type="PDB" id="4NCA"/>
    </source>
</evidence>
<evidence type="ECO:0007829" key="56">
    <source>
        <dbReference type="PDB" id="4NCB"/>
    </source>
</evidence>
<evidence type="ECO:0007829" key="57">
    <source>
        <dbReference type="PDB" id="5GQ9"/>
    </source>
</evidence>
<evidence type="ECO:0007829" key="58">
    <source>
        <dbReference type="PDB" id="5XPA"/>
    </source>
</evidence>
<evidence type="ECO:0007829" key="59">
    <source>
        <dbReference type="PDB" id="5XQ2"/>
    </source>
</evidence>
<accession>Q746M7</accession>
<organism>
    <name type="scientific">Thermus thermophilus (strain ATCC BAA-163 / DSM 7039 / HB27)</name>
    <dbReference type="NCBI Taxonomy" id="262724"/>
    <lineage>
        <taxon>Bacteria</taxon>
        <taxon>Thermotogati</taxon>
        <taxon>Deinococcota</taxon>
        <taxon>Deinococci</taxon>
        <taxon>Thermales</taxon>
        <taxon>Thermaceae</taxon>
        <taxon>Thermus</taxon>
    </lineage>
</organism>
<feature type="chain" id="PRO_0000457789" description="Protein argonaute">
    <location>
        <begin position="1"/>
        <end position="685"/>
    </location>
</feature>
<feature type="domain" description="PAZ" evidence="1 3 4">
    <location>
        <begin position="169"/>
        <end position="265"/>
    </location>
</feature>
<feature type="domain" description="Piwi" evidence="2">
    <location>
        <begin position="507"/>
        <end position="671"/>
    </location>
</feature>
<feature type="region of interest" description="N-terminal domain" evidence="3 4">
    <location>
        <begin position="1"/>
        <end position="99"/>
    </location>
</feature>
<feature type="region of interest" description="Linker L1" evidence="3 4">
    <location>
        <begin position="100"/>
        <end position="176"/>
    </location>
</feature>
<feature type="region of interest" description="Linker L2" evidence="3 4">
    <location>
        <begin position="272"/>
        <end position="337"/>
    </location>
</feature>
<feature type="region of interest" description="Mid domain" evidence="3 4">
    <location>
        <begin position="338"/>
        <end position="463"/>
    </location>
</feature>
<feature type="region of interest" description="PIWI domain" evidence="3 4">
    <location>
        <begin position="464"/>
        <end position="685"/>
    </location>
</feature>
<feature type="active site" evidence="19 20 22 23">
    <location>
        <position position="478"/>
    </location>
</feature>
<feature type="active site" evidence="22 23">
    <location>
        <position position="512"/>
    </location>
</feature>
<feature type="active site" evidence="19 20 22 23">
    <location>
        <position position="546"/>
    </location>
</feature>
<feature type="active site" evidence="19 20 22 23">
    <location>
        <position position="660"/>
    </location>
</feature>
<feature type="binding site" evidence="6 20 21 23 35 38">
    <location>
        <position position="478"/>
    </location>
    <ligand>
        <name>Mn(2+)</name>
        <dbReference type="ChEBI" id="CHEBI:29035"/>
        <label>1</label>
    </ligand>
</feature>
<feature type="binding site" evidence="6 21 23 35 38">
    <location>
        <position position="478"/>
    </location>
    <ligand>
        <name>Mn(2+)</name>
        <dbReference type="ChEBI" id="CHEBI:29035"/>
        <label>2</label>
    </ligand>
</feature>
<feature type="binding site" evidence="6 20 21 23 35 38">
    <location>
        <position position="546"/>
    </location>
    <ligand>
        <name>Mn(2+)</name>
        <dbReference type="ChEBI" id="CHEBI:29035"/>
        <label>1</label>
    </ligand>
</feature>
<feature type="binding site" evidence="6 20 21 23 35 38">
    <location>
        <position position="660"/>
    </location>
    <ligand>
        <name>Mn(2+)</name>
        <dbReference type="ChEBI" id="CHEBI:29035"/>
        <label>2</label>
    </ligand>
</feature>
<feature type="binding site" evidence="6 19 20 21 23 35 38">
    <location>
        <position position="685"/>
    </location>
    <ligand>
        <name>Mn(2+)</name>
        <dbReference type="ChEBI" id="CHEBI:29035"/>
        <label>3</label>
    </ligand>
</feature>
<feature type="mutagenesis site" description="Reduced cleavage of target RNA; further decreased when associated with A-548." evidence="3">
    <original>R</original>
    <variation>A</variation>
    <location>
        <position position="172"/>
    </location>
</feature>
<feature type="mutagenesis site" description="No change in cleavage of target RNA; when associated with 226-AHASKGA-232." evidence="3">
    <original>Y</original>
    <variation>A</variation>
    <location>
        <position position="197"/>
    </location>
</feature>
<feature type="mutagenesis site" description="No change in cleavage of target RNA." evidence="3">
    <original>YHASKGR</original>
    <variation>AHASKGA</variation>
    <location>
        <begin position="226"/>
        <end position="232"/>
    </location>
</feature>
<feature type="mutagenesis site" description="No change in cleavage of target RNA." evidence="3">
    <original>R</original>
    <variation>A</variation>
    <location>
        <position position="232"/>
    </location>
</feature>
<feature type="mutagenesis site" description="No cleavage of target RNA." evidence="3">
    <original>RNRLK</original>
    <variation>ANRLA</variation>
    <location>
        <begin position="418"/>
        <end position="422"/>
    </location>
</feature>
<feature type="mutagenesis site" description="No cleavage of target RNA." evidence="3">
    <original>K</original>
    <variation>A</variation>
    <location>
        <position position="422"/>
    </location>
</feature>
<feature type="mutagenesis site" description="No cleavage of target RNA; when associated with 418-ANRLA-422." evidence="3">
    <original>K</original>
    <variation>A</variation>
    <location>
        <position position="457"/>
    </location>
</feature>
<feature type="mutagenesis site" description="No cleavage of target RNA. No cleavage of tDNA, no DNA associates with TtAgo in E.coli; when associated with A-546. In situ binds 20-fold less short DNA and short RNA, cells elongate upon ciprofloxacin treatment; when associated with A-546. No cleavage of tDNA; when associated with A-546. Does not chop dsDNA in absence of gDNA; when associated with A-546." evidence="3 7 10 12 14">
    <original>D</original>
    <variation>A</variation>
    <location>
        <position position="478"/>
    </location>
</feature>
<feature type="mutagenesis site" description="No cleavage of DNA or RNA targets." evidence="5">
    <original>D</original>
    <variation>N</variation>
    <location>
        <position position="478"/>
    </location>
</feature>
<feature type="mutagenesis site" description="No cleavage of tDNA." evidence="12">
    <original>E</original>
    <variation>A</variation>
    <location>
        <position position="512"/>
    </location>
</feature>
<feature type="mutagenesis site" description="No cleavage of target RNA. No cleavage of tDNA, no DNA associates with TtAgo in E.coli; when associated with A-478. In situ binds 20-fold less short DNA and short RNA, cells elongate upon ciprofloxacin treatment; when associated with A-478. No cleavage of tDNA; when associated with A-478. Does not chop dsDNA in absence of gDNA; when associated with A-478." evidence="3 7 10 12 14">
    <original>D</original>
    <variation>A</variation>
    <location>
        <position position="546"/>
    </location>
</feature>
<feature type="mutagenesis site" description="No cleavage of DNA or RNA targets." evidence="5">
    <original>D</original>
    <variation>E</variation>
    <location>
        <position position="546"/>
    </location>
</feature>
<feature type="mutagenesis site" description="No cleavage of RNA targets, over 500-fold reduction in DNA target cleavage. Loss of activity on guide DNA:target DNA." evidence="5 11">
    <original>D</original>
    <variation>N</variation>
    <location>
        <position position="546"/>
    </location>
</feature>
<feature type="mutagenesis site" description="Poor cleavage of target RNA." evidence="3">
    <original>R</original>
    <variation>A</variation>
    <location>
        <position position="548"/>
    </location>
</feature>
<feature type="mutagenesis site" description="Poor cleavage of target RNA. No cleavage of tDNA." evidence="3 12">
    <original>D</original>
    <variation>A</variation>
    <location>
        <position position="660"/>
    </location>
</feature>
<feature type="strand" evidence="56">
    <location>
        <begin position="6"/>
        <end position="18"/>
    </location>
</feature>
<feature type="turn" evidence="56">
    <location>
        <begin position="21"/>
        <end position="24"/>
    </location>
</feature>
<feature type="strand" evidence="56">
    <location>
        <begin position="27"/>
        <end position="35"/>
    </location>
</feature>
<feature type="turn" evidence="56">
    <location>
        <begin position="39"/>
        <end position="41"/>
    </location>
</feature>
<feature type="helix" evidence="56">
    <location>
        <begin position="42"/>
        <end position="52"/>
    </location>
</feature>
<feature type="strand" evidence="56">
    <location>
        <begin position="55"/>
        <end position="60"/>
    </location>
</feature>
<feature type="strand" evidence="56">
    <location>
        <begin position="63"/>
        <end position="68"/>
    </location>
</feature>
<feature type="helix" evidence="56">
    <location>
        <begin position="70"/>
        <end position="72"/>
    </location>
</feature>
<feature type="strand" evidence="56">
    <location>
        <begin position="76"/>
        <end position="80"/>
    </location>
</feature>
<feature type="strand" evidence="49">
    <location>
        <begin position="81"/>
        <end position="83"/>
    </location>
</feature>
<feature type="strand" evidence="56">
    <location>
        <begin position="85"/>
        <end position="95"/>
    </location>
</feature>
<feature type="strand" evidence="57">
    <location>
        <begin position="100"/>
        <end position="102"/>
    </location>
</feature>
<feature type="helix" evidence="56">
    <location>
        <begin position="103"/>
        <end position="121"/>
    </location>
</feature>
<feature type="strand" evidence="56">
    <location>
        <begin position="126"/>
        <end position="130"/>
    </location>
</feature>
<feature type="strand" evidence="56">
    <location>
        <begin position="133"/>
        <end position="142"/>
    </location>
</feature>
<feature type="strand" evidence="56">
    <location>
        <begin position="145"/>
        <end position="157"/>
    </location>
</feature>
<feature type="strand" evidence="56">
    <location>
        <begin position="161"/>
        <end position="175"/>
    </location>
</feature>
<feature type="helix" evidence="56">
    <location>
        <begin position="179"/>
        <end position="184"/>
    </location>
</feature>
<feature type="strand" evidence="56">
    <location>
        <begin position="191"/>
        <end position="199"/>
    </location>
</feature>
<feature type="strand" evidence="56">
    <location>
        <begin position="201"/>
        <end position="206"/>
    </location>
</feature>
<feature type="turn" evidence="52">
    <location>
        <begin position="212"/>
        <end position="214"/>
    </location>
</feature>
<feature type="strand" evidence="53">
    <location>
        <begin position="220"/>
        <end position="222"/>
    </location>
</feature>
<feature type="helix" evidence="56">
    <location>
        <begin position="223"/>
        <end position="229"/>
    </location>
</feature>
<feature type="strand" evidence="55">
    <location>
        <begin position="233"/>
        <end position="236"/>
    </location>
</feature>
<feature type="strand" evidence="56">
    <location>
        <begin position="241"/>
        <end position="246"/>
    </location>
</feature>
<feature type="strand" evidence="56">
    <location>
        <begin position="249"/>
        <end position="257"/>
    </location>
</feature>
<feature type="turn" evidence="56">
    <location>
        <begin position="258"/>
        <end position="260"/>
    </location>
</feature>
<feature type="strand" evidence="56">
    <location>
        <begin position="261"/>
        <end position="263"/>
    </location>
</feature>
<feature type="helix" evidence="56">
    <location>
        <begin position="267"/>
        <end position="269"/>
    </location>
</feature>
<feature type="helix" evidence="52">
    <location>
        <begin position="271"/>
        <end position="273"/>
    </location>
</feature>
<feature type="helix" evidence="56">
    <location>
        <begin position="283"/>
        <end position="300"/>
    </location>
</feature>
<feature type="strand" evidence="54">
    <location>
        <begin position="301"/>
        <end position="303"/>
    </location>
</feature>
<feature type="strand" evidence="56">
    <location>
        <begin position="307"/>
        <end position="315"/>
    </location>
</feature>
<feature type="strand" evidence="56">
    <location>
        <begin position="322"/>
        <end position="326"/>
    </location>
</feature>
<feature type="helix" evidence="56">
    <location>
        <begin position="330"/>
        <end position="332"/>
    </location>
</feature>
<feature type="helix" evidence="56">
    <location>
        <begin position="333"/>
        <end position="336"/>
    </location>
</feature>
<feature type="strand" evidence="56">
    <location>
        <begin position="344"/>
        <end position="350"/>
    </location>
</feature>
<feature type="strand" evidence="48">
    <location>
        <begin position="352"/>
        <end position="354"/>
    </location>
</feature>
<feature type="helix" evidence="56">
    <location>
        <begin position="359"/>
        <end position="372"/>
    </location>
</feature>
<feature type="strand" evidence="56">
    <location>
        <begin position="376"/>
        <end position="381"/>
    </location>
</feature>
<feature type="helix" evidence="56">
    <location>
        <begin position="385"/>
        <end position="387"/>
    </location>
</feature>
<feature type="helix" evidence="56">
    <location>
        <begin position="389"/>
        <end position="400"/>
    </location>
</feature>
<feature type="strand" evidence="56">
    <location>
        <begin position="405"/>
        <end position="411"/>
    </location>
</feature>
<feature type="helix" evidence="56">
    <location>
        <begin position="415"/>
        <end position="427"/>
    </location>
</feature>
<feature type="strand" evidence="56">
    <location>
        <begin position="432"/>
        <end position="438"/>
    </location>
</feature>
<feature type="helix" evidence="56">
    <location>
        <begin position="444"/>
        <end position="457"/>
    </location>
</feature>
<feature type="strand" evidence="55">
    <location>
        <begin position="464"/>
        <end position="467"/>
    </location>
</feature>
<feature type="strand" evidence="56">
    <location>
        <begin position="472"/>
        <end position="480"/>
    </location>
</feature>
<feature type="strand" evidence="56">
    <location>
        <begin position="482"/>
        <end position="495"/>
    </location>
</feature>
<feature type="turn" evidence="51">
    <location>
        <begin position="496"/>
        <end position="498"/>
    </location>
</feature>
<feature type="strand" evidence="56">
    <location>
        <begin position="500"/>
        <end position="503"/>
    </location>
</feature>
<feature type="strand" evidence="56">
    <location>
        <begin position="507"/>
        <end position="512"/>
    </location>
</feature>
<feature type="helix" evidence="56">
    <location>
        <begin position="516"/>
        <end position="534"/>
    </location>
</feature>
<feature type="strand" evidence="56">
    <location>
        <begin position="539"/>
        <end position="547"/>
    </location>
</feature>
<feature type="turn" evidence="56">
    <location>
        <begin position="551"/>
        <end position="554"/>
    </location>
</feature>
<feature type="helix" evidence="56">
    <location>
        <begin position="555"/>
        <end position="563"/>
    </location>
</feature>
<feature type="strand" evidence="56">
    <location>
        <begin position="567"/>
        <end position="577"/>
    </location>
</feature>
<feature type="strand" evidence="56">
    <location>
        <begin position="581"/>
        <end position="586"/>
    </location>
</feature>
<feature type="strand" evidence="56">
    <location>
        <begin position="592"/>
        <end position="595"/>
    </location>
</feature>
<feature type="turn" evidence="57">
    <location>
        <begin position="596"/>
        <end position="599"/>
    </location>
</feature>
<feature type="strand" evidence="56">
    <location>
        <begin position="600"/>
        <end position="604"/>
    </location>
</feature>
<feature type="helix" evidence="53">
    <location>
        <begin position="609"/>
        <end position="611"/>
    </location>
</feature>
<feature type="strand" evidence="56">
    <location>
        <begin position="617"/>
        <end position="623"/>
    </location>
</feature>
<feature type="helix" evidence="56">
    <location>
        <begin position="628"/>
        <end position="638"/>
    </location>
</feature>
<feature type="helix" evidence="55">
    <location>
        <begin position="639"/>
        <end position="641"/>
    </location>
</feature>
<feature type="turn" evidence="58">
    <location>
        <begin position="643"/>
        <end position="645"/>
    </location>
</feature>
<feature type="strand" evidence="53">
    <location>
        <begin position="646"/>
        <end position="648"/>
    </location>
</feature>
<feature type="helix" evidence="56">
    <location>
        <begin position="654"/>
        <end position="669"/>
    </location>
</feature>
<feature type="helix" evidence="52">
    <location>
        <begin position="671"/>
        <end position="673"/>
    </location>
</feature>
<feature type="helix" evidence="50">
    <location>
        <begin position="674"/>
        <end position="676"/>
    </location>
</feature>
<feature type="strand" evidence="59">
    <location>
        <begin position="679"/>
        <end position="681"/>
    </location>
</feature>
<reference evidence="25" key="1">
    <citation type="journal article" date="2004" name="Nat. Biotechnol.">
        <title>The genome sequence of the extreme thermophile Thermus thermophilus.</title>
        <authorList>
            <person name="Henne A."/>
            <person name="Brueggemann H."/>
            <person name="Raasch C."/>
            <person name="Wiezer A."/>
            <person name="Hartsch T."/>
            <person name="Liesegang H."/>
            <person name="Johann A."/>
            <person name="Lienard T."/>
            <person name="Gohl O."/>
            <person name="Martinez-Arias R."/>
            <person name="Jacobi C."/>
            <person name="Starkuviene V."/>
            <person name="Schlenczeck S."/>
            <person name="Dencker S."/>
            <person name="Huber R."/>
            <person name="Klenk H.-P."/>
            <person name="Kramer W."/>
            <person name="Merkl R."/>
            <person name="Gottschalk G."/>
            <person name="Fritz H.-J."/>
        </authorList>
    </citation>
    <scope>NUCLEOTIDE SEQUENCE [LARGE SCALE GENOMIC DNA]</scope>
    <source>
        <strain>ATCC BAA-163 / DSM 7039 / HB27</strain>
        <plasmid>pTT27</plasmid>
    </source>
</reference>
<reference key="2">
    <citation type="journal article" date="2014" name="Nature">
        <title>DNA-guided DNA interference by a prokaryotic Argonaute.</title>
        <authorList>
            <person name="Swarts D.C."/>
            <person name="Jore M.M."/>
            <person name="Westra E.R."/>
            <person name="Zhu Y."/>
            <person name="Janssen J.H."/>
            <person name="Snijders A.P."/>
            <person name="Wang Y."/>
            <person name="Patel D.J."/>
            <person name="Berenguer J."/>
            <person name="Brouns S.J.J."/>
            <person name="van der Oost J."/>
        </authorList>
    </citation>
    <scope>FUNCTION</scope>
    <scope>CATALYTIC ACTIVITY</scope>
    <scope>EXPRESSION IN E.COLI</scope>
    <scope>COFACTOR</scope>
    <scope>BIOPHYSICOCHEMICAL PROPERTIES</scope>
    <scope>DISRUPTION PHENOTYPE</scope>
    <scope>MUTAGENESIS OF ASP-478 AND ASP-546</scope>
    <source>
        <strain>ATCC 27634 / DSM 579 / HB8</strain>
        <strain>ATCC BAA-163 / DSM 7039 / HB27</strain>
    </source>
</reference>
<reference key="3">
    <citation type="journal article" date="2015" name="J. Bacteriol.">
        <title>Noncanonical cell-to-cell DNA transfer in Thermus spp. is insensitive to argonaute-mediated interference.</title>
        <authorList>
            <person name="Blesa A."/>
            <person name="Cesar C.E."/>
            <person name="Averhoff B."/>
            <person name="Berenguer J."/>
        </authorList>
    </citation>
    <scope>FUNCTION</scope>
    <scope>DISRUPTION PHENOTYPE</scope>
    <source>
        <strain>ATCC BAA-163 / DSM 7039 / HB27</strain>
    </source>
</reference>
<reference key="4">
    <citation type="journal article" date="2015" name="PLoS ONE">
        <title>Effects of Argonaute on Gene Expression in Thermus thermophilus.</title>
        <authorList>
            <person name="Swarts D.C."/>
            <person name="Koehorst J.J."/>
            <person name="Westra E.R."/>
            <person name="Schaap P.J."/>
            <person name="van der Oost J."/>
        </authorList>
    </citation>
    <scope>FUNCTION</scope>
    <scope>DISRUPTION PHENOTYPE</scope>
    <source>
        <strain>ATCC BAA-163 / DSM 7039 / HB27</strain>
    </source>
</reference>
<reference key="5">
    <citation type="journal article" date="2017" name="Mol. Cell">
        <title>Autonomous Generation and Loading of DNA Guides by Bacterial Argonaute.</title>
        <authorList>
            <person name="Swarts D.C."/>
            <person name="Szczepaniak M."/>
            <person name="Sheng G."/>
            <person name="Chandradoss S.D."/>
            <person name="Zhu Y."/>
            <person name="Timmers E.M."/>
            <person name="Zhang Y."/>
            <person name="Zhao H."/>
            <person name="Lou J."/>
            <person name="Wang Y."/>
            <person name="Joo C."/>
            <person name="van der Oost J."/>
        </authorList>
    </citation>
    <scope>FUNCTION</scope>
    <scope>MUTAGENESIS OF ASP-478 AND ASP-546</scope>
</reference>
<reference key="6">
    <citation type="journal article" date="2018" name="PLoS ONE">
        <title>Single-stranded binding proteins and helicase enhance the activity of prokaryotic argonautes in vitro.</title>
        <authorList>
            <person name="Hunt E.A."/>
            <person name="Evans T.C. Jr."/>
            <person name="Tanner N.A."/>
        </authorList>
    </citation>
    <scope>BIOTECHNOLOGY</scope>
    <scope>MUTAGENESIS OF ASP-478; GLU-512; ASP-546 AND ASP-660</scope>
</reference>
<reference key="7">
    <citation type="journal article" date="2019" name="Nucleic Acids Res.">
        <title>The prokaryotic Argonaute proteins enhance homology sequence-directed recombination in bacteria.</title>
        <authorList>
            <person name="Fu L."/>
            <person name="Xie C."/>
            <person name="Jin Z."/>
            <person name="Tu Z."/>
            <person name="Han L."/>
            <person name="Jin M."/>
            <person name="Xiang Y."/>
            <person name="Zhang A."/>
        </authorList>
    </citation>
    <scope>BIOTECHNOLOGY</scope>
</reference>
<reference key="8">
    <citation type="journal article" date="2020" name="Cell">
        <title>Thermus thermophilus Argonaute Functions in the Completion of DNA Replication.</title>
        <authorList>
            <person name="Jolly S.M."/>
            <person name="Gainetdinov I."/>
            <person name="Jouravleva K."/>
            <person name="Zhang H."/>
            <person name="Strittmatter L."/>
            <person name="Bailey S.M."/>
            <person name="Hendricks G.M."/>
            <person name="Dhabaria A."/>
            <person name="Ueberheide B."/>
            <person name="Zamore P.D."/>
        </authorList>
    </citation>
    <scope>FUNCTION</scope>
    <scope>COFACTOR</scope>
    <scope>SUBUNIT</scope>
    <scope>INDUCTION</scope>
    <scope>DISRUPTION PHENOTYPE</scope>
    <scope>MUTAGENESIS OF ASP-478 AND ASP-546</scope>
    <source>
        <strain>ATCC BAA-163 / DSM 7039 / HB27</strain>
        <plasmid>pTT27</plasmid>
    </source>
</reference>
<reference evidence="26 27" key="9">
    <citation type="journal article" date="2008" name="Nature">
        <title>Structure of the guide-strand-containing argonaute silencing complex.</title>
        <authorList>
            <person name="Wang Y."/>
            <person name="Sheng G."/>
            <person name="Juranek S."/>
            <person name="Tuschl T."/>
            <person name="Patel D.J."/>
        </authorList>
    </citation>
    <scope>X-RAY CRYSTALLOGRAPHY (2.70 ANGSTROMS) IN COMPLEX WITH GUIDE DNA AND MAGNESIUM</scope>
    <scope>FUNCTION</scope>
    <scope>CATALYTIC ACTIVITY</scope>
    <scope>PROBABLE ACTIVE SITES</scope>
    <scope>COFACTOR</scope>
    <scope>DOMAIN</scope>
    <scope>DNA-BINDING</scope>
    <scope>MUTAGENESIS OF ARG-172; TYR-197; 226-TYR--ARG-232; ARG-232; 418-ARG--LYS-422; LYS-422; LYS-457; ASP-478; ASP-546; ARG-548 AND ASP-660</scope>
    <source>
        <strain>ATCC BAA-163 / DSM 7039 / HB27</strain>
    </source>
</reference>
<reference evidence="28" key="10">
    <citation type="journal article" date="2008" name="Nature">
        <title>Structure of an argonaute silencing complex with a seed-containing guide DNA and target RNA duplex.</title>
        <authorList>
            <person name="Wang Y."/>
            <person name="Juranek S."/>
            <person name="Li H."/>
            <person name="Sheng G."/>
            <person name="Tuschl T."/>
            <person name="Patel D.J."/>
        </authorList>
    </citation>
    <scope>X-RAY CRYSTALLOGRAPHY (3.00 ANGSTROMS) IN COMPLEX WITH GUIDE DNA:TARGET RNA DUPLEX AND MAGNESIUM</scope>
    <scope>FUNCTION</scope>
    <scope>CATALYTIC ACTIVITY</scope>
    <scope>BIOPHYSICOCHEMICAL PROPERTIES</scope>
    <scope>PROBABLE ACTIVE SITES</scope>
    <scope>DOMAIN</scope>
    <source>
        <strain>ATCC BAA-163 / DSM 7039 / HB27</strain>
    </source>
</reference>
<reference evidence="29 30 31 32 33 34" key="11">
    <citation type="journal article" date="2009" name="Nature">
        <title>Nucleation, propagation and cleavage of target RNAs in Ago silencing complexes.</title>
        <authorList>
            <person name="Wang Y."/>
            <person name="Juranek S."/>
            <person name="Li H."/>
            <person name="Sheng G."/>
            <person name="Wardle G.S."/>
            <person name="Tuschl T."/>
            <person name="Patel D.J."/>
        </authorList>
    </citation>
    <scope>X-RAY CRYSTALLOGRAPHY (2.60 ANGSTROMS) IN COMPLEX WITH GUIDE DNA:TARGET RNA DUPLEX AND MAGNESIUM</scope>
    <scope>FUNCTION</scope>
    <scope>CATALYTIC ACTIVITY</scope>
    <scope>BIOPHYSICOCHEMICAL PROPERTIES</scope>
    <scope>COFACTOR</scope>
    <scope>DOMAIN</scope>
    <scope>MUTAGENESIS OF ASP-478 AND ASP-546</scope>
    <source>
        <strain>ATCC BAA-163 / DSM 7039 / HB27</strain>
    </source>
</reference>
<reference evidence="35 36 37 38 39 40" key="12">
    <citation type="journal article" date="2014" name="Proc. Natl. Acad. Sci. U.S.A.">
        <title>Structure-based cleavage mechanism of Thermus thermophilus Argonaute DNA guide strand-mediated DNA target cleavage.</title>
        <authorList>
            <person name="Sheng G."/>
            <person name="Zhao H."/>
            <person name="Wang J."/>
            <person name="Rao Y."/>
            <person name="Tian W."/>
            <person name="Swarts D.C."/>
            <person name="van der Oost J."/>
            <person name="Patel D.J."/>
            <person name="Wang Y."/>
        </authorList>
    </citation>
    <scope>X-RAY CRYSTALLOGRAPHY (2.19 ANGSTROMS) IN COMPLEX WITH GUIDE DNA:TARGET DNA DUPLEXES AND MAGNESIUM OR MANGANESE</scope>
    <scope>FUNCTION</scope>
    <scope>CATALYTIC ACTIVITY</scope>
    <scope>ACTIVE SITES</scope>
    <scope>COFACTOR</scope>
    <scope>DOMAIN</scope>
    <source>
        <strain>ATCC BAA-163 / DSM 7039 / HB27</strain>
    </source>
</reference>
<reference evidence="41" key="13">
    <citation type="submission" date="2016-08" db="PDB data bank">
        <title>Crystal structure of Thermus thermophilus Argonaute in complex with g1C siDNA and DNA target.</title>
        <authorList>
            <person name="Zhao H."/>
            <person name="Sheng G."/>
            <person name="Wang Y."/>
        </authorList>
    </citation>
    <scope>X-RAY CRYSTALLOGRAPHY (2.70 ANGSTROMS) IN COMPLEX WITH GUIDE DNA:TARGET DNA DUPLEX AND MAGNESIUM</scope>
    <source>
        <strain>ATCC BAA-163 / DSM 7039 / HB27</strain>
    </source>
</reference>
<reference evidence="42 43 44 45 46 47" key="14">
    <citation type="journal article" date="2017" name="Nucleic Acids Res.">
        <title>Structure/cleavage-based insights into helical perturbations at bulge sites within T. thermophilus Argonaute silencing complexes.</title>
        <authorList>
            <person name="Sheng G."/>
            <person name="Gogakos T."/>
            <person name="Wang J."/>
            <person name="Zhao H."/>
            <person name="Serganov A."/>
            <person name="Juranek S."/>
            <person name="Tuschl T."/>
            <person name="Patel D.J."/>
            <person name="Wang Y."/>
        </authorList>
    </citation>
    <scope>X-RAY CRYSTALLOGRAPHY (2.63 ANGSTROMS) IN COMPLEX WITH GUIDE DNA:TARGET DNA DUPLEX OR GUIDE DNA:TARGET RNA DUPLEX AND MAGNESIUM</scope>
    <scope>FUNCTION</scope>
    <scope>CATALYTIC ACTIVITY</scope>
    <scope>ACTIVE SITES</scope>
    <scope>MUTAGENESIS OF ASP-546</scope>
    <source>
        <strain>ATCC BAA-163 / DSM 7039 / HB27</strain>
    </source>
</reference>
<gene>
    <name evidence="17" type="primary">ago</name>
    <name evidence="25" type="ordered locus">TT_P0026</name>
</gene>
<keyword id="KW-0002">3D-structure</keyword>
<keyword id="KW-0235">DNA replication</keyword>
<keyword id="KW-0238">DNA-binding</keyword>
<keyword id="KW-0255">Endonuclease</keyword>
<keyword id="KW-0378">Hydrolase</keyword>
<keyword id="KW-0460">Magnesium</keyword>
<keyword id="KW-0479">Metal-binding</keyword>
<keyword id="KW-0540">Nuclease</keyword>
<keyword id="KW-0614">Plasmid</keyword>
<keyword id="KW-0694">RNA-binding</keyword>
<sequence>MNHLGKTEVFLNRFALRPLNPEELRPWRLEVVLDPPPGREEVYPLLAQVARRAGGVTVRMGDGLASWSPPEVLVLEGTLARMGQTYAYRLYPKGRRPLDPKDPGERSVLSALARRLLQERLRRLEGVWVEGLAVYRREHARGPGWRVLGGAVLDLWVSDSGAFLLEVDPAYRILCEMSLEAWLAQGHPLPKRVRNAYDRRTWELLRLGEEDPKELPLPGGLSLLDYHASKGRLQGREGGRVAWVADPKDPRKPIPHLTGLLVPVLTLEDLHEEEGSLALSLPWEERRRRTREIASWIGRRLGLGTPEAVRAQAYRLSIPKLMGRRAVSKPADALRVGFYRAQETALALLRLDGAQGWPEFLRRALLRAFGASGASLRLHTLHAHPSQGLAFREALRKAKEEGVQAVLVLTPPMAWEDRNRLKALLLREGLPSQILNVPLREEERHRWENALLGLLAKAGLQVVALSGAYPAELAVGFDAGGRESFRFGGAACAVGGDGGHLLWTLPEAQAGERIPQEVVWDLLEETLWAFRRKAGRLPSRVLLLRDGRVPQDEFALALEALAREGIAYDLVSVRKSGGGRVYPVQGRLADGLYVPLEDKTFLLLTVHRDFRGTPRPLKLVHEAGDTPLEALAHQIFHLTRLYPASGFAFPRLPAPLHLADRLVKEVGRLGIRHLKEVDREKLFFV</sequence>
<proteinExistence type="evidence at protein level"/>
<geneLocation type="plasmid">
    <name>pTT27</name>
</geneLocation>
<dbReference type="EC" id="3.1.24.-" evidence="5 7"/>
<dbReference type="EMBL" id="AE017222">
    <property type="protein sequence ID" value="AAS82356.1"/>
    <property type="molecule type" value="Genomic_DNA"/>
</dbReference>
<dbReference type="RefSeq" id="WP_011174533.1">
    <property type="nucleotide sequence ID" value="NC_005838.1"/>
</dbReference>
<dbReference type="PDB" id="3DLB">
    <property type="method" value="X-ray"/>
    <property type="resolution" value="2.70 A"/>
    <property type="chains" value="A/B=1-685"/>
</dbReference>
<dbReference type="PDB" id="3DLH">
    <property type="method" value="X-ray"/>
    <property type="resolution" value="3.00 A"/>
    <property type="chains" value="A/B=1-685"/>
</dbReference>
<dbReference type="PDB" id="3F73">
    <property type="method" value="X-ray"/>
    <property type="resolution" value="3.00 A"/>
    <property type="chains" value="A/B=1-685"/>
</dbReference>
<dbReference type="PDB" id="3HJF">
    <property type="method" value="X-ray"/>
    <property type="resolution" value="3.06 A"/>
    <property type="chains" value="A=1-685"/>
</dbReference>
<dbReference type="PDB" id="3HK2">
    <property type="method" value="X-ray"/>
    <property type="resolution" value="2.80 A"/>
    <property type="chains" value="A/B=1-685"/>
</dbReference>
<dbReference type="PDB" id="3HM9">
    <property type="method" value="X-ray"/>
    <property type="resolution" value="3.30 A"/>
    <property type="chains" value="A=1-685"/>
</dbReference>
<dbReference type="PDB" id="3HO1">
    <property type="method" value="X-ray"/>
    <property type="resolution" value="2.60 A"/>
    <property type="chains" value="A=1-685"/>
</dbReference>
<dbReference type="PDB" id="3HVR">
    <property type="method" value="X-ray"/>
    <property type="resolution" value="3.21 A"/>
    <property type="chains" value="A/B=1-685"/>
</dbReference>
<dbReference type="PDB" id="3HXM">
    <property type="method" value="X-ray"/>
    <property type="resolution" value="3.10 A"/>
    <property type="chains" value="A=1-685"/>
</dbReference>
<dbReference type="PDB" id="4KPY">
    <property type="method" value="X-ray"/>
    <property type="resolution" value="2.41 A"/>
    <property type="chains" value="A/B=1-685"/>
</dbReference>
<dbReference type="PDB" id="4N41">
    <property type="method" value="X-ray"/>
    <property type="resolution" value="2.25 A"/>
    <property type="chains" value="A/B=1-685"/>
</dbReference>
<dbReference type="PDB" id="4N47">
    <property type="method" value="X-ray"/>
    <property type="resolution" value="2.82 A"/>
    <property type="chains" value="A=1-685"/>
</dbReference>
<dbReference type="PDB" id="4N76">
    <property type="method" value="X-ray"/>
    <property type="resolution" value="2.89 A"/>
    <property type="chains" value="A/B=1-685"/>
</dbReference>
<dbReference type="PDB" id="4NCA">
    <property type="method" value="X-ray"/>
    <property type="resolution" value="2.49 A"/>
    <property type="chains" value="A/B=1-685"/>
</dbReference>
<dbReference type="PDB" id="4NCB">
    <property type="method" value="X-ray"/>
    <property type="resolution" value="2.19 A"/>
    <property type="chains" value="A/B=1-685"/>
</dbReference>
<dbReference type="PDB" id="5GQ9">
    <property type="method" value="X-ray"/>
    <property type="resolution" value="2.70 A"/>
    <property type="chains" value="A/B=1-685"/>
</dbReference>
<dbReference type="PDB" id="5XOU">
    <property type="method" value="X-ray"/>
    <property type="resolution" value="2.63 A"/>
    <property type="chains" value="A/B=1-685"/>
</dbReference>
<dbReference type="PDB" id="5XOW">
    <property type="method" value="X-ray"/>
    <property type="resolution" value="2.90 A"/>
    <property type="chains" value="A=1-685"/>
</dbReference>
<dbReference type="PDB" id="5XP8">
    <property type="method" value="X-ray"/>
    <property type="resolution" value="3.10 A"/>
    <property type="chains" value="A=1-685"/>
</dbReference>
<dbReference type="PDB" id="5XPA">
    <property type="method" value="X-ray"/>
    <property type="resolution" value="2.90 A"/>
    <property type="chains" value="A=1-685"/>
</dbReference>
<dbReference type="PDB" id="5XPG">
    <property type="method" value="X-ray"/>
    <property type="resolution" value="2.80 A"/>
    <property type="chains" value="A=1-685"/>
</dbReference>
<dbReference type="PDB" id="5XQ2">
    <property type="method" value="X-ray"/>
    <property type="resolution" value="3.33 A"/>
    <property type="chains" value="A/B=1-685"/>
</dbReference>
<dbReference type="PDBsum" id="3DLB"/>
<dbReference type="PDBsum" id="3DLH"/>
<dbReference type="PDBsum" id="3F73"/>
<dbReference type="PDBsum" id="3HJF"/>
<dbReference type="PDBsum" id="3HK2"/>
<dbReference type="PDBsum" id="3HM9"/>
<dbReference type="PDBsum" id="3HO1"/>
<dbReference type="PDBsum" id="3HVR"/>
<dbReference type="PDBsum" id="3HXM"/>
<dbReference type="PDBsum" id="4KPY"/>
<dbReference type="PDBsum" id="4N41"/>
<dbReference type="PDBsum" id="4N47"/>
<dbReference type="PDBsum" id="4N76"/>
<dbReference type="PDBsum" id="4NCA"/>
<dbReference type="PDBsum" id="4NCB"/>
<dbReference type="PDBsum" id="5GQ9"/>
<dbReference type="PDBsum" id="5XOU"/>
<dbReference type="PDBsum" id="5XOW"/>
<dbReference type="PDBsum" id="5XP8"/>
<dbReference type="PDBsum" id="5XPA"/>
<dbReference type="PDBsum" id="5XPG"/>
<dbReference type="PDBsum" id="5XQ2"/>
<dbReference type="SASBDB" id="Q746M7"/>
<dbReference type="SMR" id="Q746M7"/>
<dbReference type="KEGG" id="tth:TT_P0026"/>
<dbReference type="eggNOG" id="COG1431">
    <property type="taxonomic scope" value="Bacteria"/>
</dbReference>
<dbReference type="HOGENOM" id="CLU_383443_0_0_0"/>
<dbReference type="OrthoDB" id="29144at2"/>
<dbReference type="EvolutionaryTrace" id="Q746M7"/>
<dbReference type="Proteomes" id="UP000000592">
    <property type="component" value="Plasmid pTT27"/>
</dbReference>
<dbReference type="GO" id="GO:0003677">
    <property type="term" value="F:DNA binding"/>
    <property type="evidence" value="ECO:0007669"/>
    <property type="project" value="UniProtKB-KW"/>
</dbReference>
<dbReference type="GO" id="GO:0004520">
    <property type="term" value="F:DNA endonuclease activity"/>
    <property type="evidence" value="ECO:0000314"/>
    <property type="project" value="UniProtKB"/>
</dbReference>
<dbReference type="GO" id="GO:0030145">
    <property type="term" value="F:manganese ion binding"/>
    <property type="evidence" value="ECO:0000314"/>
    <property type="project" value="UniProtKB"/>
</dbReference>
<dbReference type="GO" id="GO:0003723">
    <property type="term" value="F:RNA binding"/>
    <property type="evidence" value="ECO:0007669"/>
    <property type="project" value="UniProtKB-KW"/>
</dbReference>
<dbReference type="GO" id="GO:0044355">
    <property type="term" value="P:clearance of foreign intracellular DNA"/>
    <property type="evidence" value="ECO:0000315"/>
    <property type="project" value="UniProtKB"/>
</dbReference>
<dbReference type="GO" id="GO:0006260">
    <property type="term" value="P:DNA replication"/>
    <property type="evidence" value="ECO:0007669"/>
    <property type="project" value="UniProtKB-KW"/>
</dbReference>
<dbReference type="CDD" id="cd04659">
    <property type="entry name" value="Piwi_piwi-like_ProArk"/>
    <property type="match status" value="1"/>
</dbReference>
<dbReference type="Gene3D" id="3.30.530.60">
    <property type="match status" value="3"/>
</dbReference>
<dbReference type="Gene3D" id="3.40.50.2300">
    <property type="match status" value="1"/>
</dbReference>
<dbReference type="Gene3D" id="3.30.420.10">
    <property type="entry name" value="Ribonuclease H-like superfamily/Ribonuclease H"/>
    <property type="match status" value="1"/>
</dbReference>
<dbReference type="InterPro" id="IPR054763">
    <property type="entry name" value="Ago_mid"/>
</dbReference>
<dbReference type="InterPro" id="IPR054764">
    <property type="entry name" value="Ago_N_thermus"/>
</dbReference>
<dbReference type="InterPro" id="IPR040895">
    <property type="entry name" value="Ago_PAZ"/>
</dbReference>
<dbReference type="InterPro" id="IPR003100">
    <property type="entry name" value="PAZ_dom"/>
</dbReference>
<dbReference type="InterPro" id="IPR003165">
    <property type="entry name" value="Piwi"/>
</dbReference>
<dbReference type="InterPro" id="IPR012337">
    <property type="entry name" value="RNaseH-like_sf"/>
</dbReference>
<dbReference type="InterPro" id="IPR036397">
    <property type="entry name" value="RNaseH_sf"/>
</dbReference>
<dbReference type="Pfam" id="PF22474">
    <property type="entry name" value="Ago_Mid"/>
    <property type="match status" value="1"/>
</dbReference>
<dbReference type="Pfam" id="PF22472">
    <property type="entry name" value="Ago_N_2"/>
    <property type="match status" value="1"/>
</dbReference>
<dbReference type="Pfam" id="PF18309">
    <property type="entry name" value="PAZ_3"/>
    <property type="match status" value="1"/>
</dbReference>
<dbReference type="SMART" id="SM00950">
    <property type="entry name" value="Piwi"/>
    <property type="match status" value="1"/>
</dbReference>
<dbReference type="SUPFAM" id="SSF53098">
    <property type="entry name" value="Ribonuclease H-like"/>
    <property type="match status" value="1"/>
</dbReference>
<dbReference type="PROSITE" id="PS50821">
    <property type="entry name" value="PAZ"/>
    <property type="match status" value="1"/>
</dbReference>
<dbReference type="PROSITE" id="PS50822">
    <property type="entry name" value="PIWI"/>
    <property type="match status" value="1"/>
</dbReference>